<comment type="function">
    <text evidence="1">One of several proteins that assist in the late maturation steps of the functional core of the 30S ribosomal subunit. Associates with free 30S ribosomal subunits (but not with 30S subunits that are part of 70S ribosomes or polysomes). Required for efficient processing of 16S rRNA. May interact with the 5'-terminal helix region of 16S rRNA.</text>
</comment>
<comment type="subunit">
    <text evidence="1">Monomer. Binds 30S ribosomal subunits, but not 50S ribosomal subunits or 70S ribosomes.</text>
</comment>
<comment type="subcellular location">
    <subcellularLocation>
        <location evidence="1">Cytoplasm</location>
    </subcellularLocation>
</comment>
<comment type="similarity">
    <text evidence="1">Belongs to the RbfA family.</text>
</comment>
<evidence type="ECO:0000255" key="1">
    <source>
        <dbReference type="HAMAP-Rule" id="MF_00003"/>
    </source>
</evidence>
<protein>
    <recommendedName>
        <fullName evidence="1">Ribosome-binding factor A</fullName>
    </recommendedName>
</protein>
<reference key="1">
    <citation type="submission" date="2007-06" db="EMBL/GenBank/DDBJ databases">
        <title>Complete sequence of Marinomonas sp. MWYL1.</title>
        <authorList>
            <consortium name="US DOE Joint Genome Institute"/>
            <person name="Copeland A."/>
            <person name="Lucas S."/>
            <person name="Lapidus A."/>
            <person name="Barry K."/>
            <person name="Glavina del Rio T."/>
            <person name="Dalin E."/>
            <person name="Tice H."/>
            <person name="Pitluck S."/>
            <person name="Kiss H."/>
            <person name="Brettin T."/>
            <person name="Bruce D."/>
            <person name="Detter J.C."/>
            <person name="Han C."/>
            <person name="Schmutz J."/>
            <person name="Larimer F."/>
            <person name="Land M."/>
            <person name="Hauser L."/>
            <person name="Kyrpides N."/>
            <person name="Kim E."/>
            <person name="Johnston A.W.B."/>
            <person name="Todd J.D."/>
            <person name="Rogers R."/>
            <person name="Wexler M."/>
            <person name="Bond P.L."/>
            <person name="Li Y."/>
            <person name="Richardson P."/>
        </authorList>
    </citation>
    <scope>NUCLEOTIDE SEQUENCE [LARGE SCALE GENOMIC DNA]</scope>
    <source>
        <strain>MWYL1</strain>
    </source>
</reference>
<accession>A6VU30</accession>
<proteinExistence type="inferred from homology"/>
<keyword id="KW-0963">Cytoplasm</keyword>
<keyword id="KW-0690">Ribosome biogenesis</keyword>
<feature type="chain" id="PRO_1000073767" description="Ribosome-binding factor A">
    <location>
        <begin position="1"/>
        <end position="129"/>
    </location>
</feature>
<name>RBFA_MARMS</name>
<dbReference type="EMBL" id="CP000749">
    <property type="protein sequence ID" value="ABR69959.1"/>
    <property type="molecule type" value="Genomic_DNA"/>
</dbReference>
<dbReference type="SMR" id="A6VU30"/>
<dbReference type="STRING" id="400668.Mmwyl1_1028"/>
<dbReference type="KEGG" id="mmw:Mmwyl1_1028"/>
<dbReference type="eggNOG" id="COG0858">
    <property type="taxonomic scope" value="Bacteria"/>
</dbReference>
<dbReference type="HOGENOM" id="CLU_089475_5_0_6"/>
<dbReference type="OrthoDB" id="307788at2"/>
<dbReference type="GO" id="GO:0005829">
    <property type="term" value="C:cytosol"/>
    <property type="evidence" value="ECO:0007669"/>
    <property type="project" value="TreeGrafter"/>
</dbReference>
<dbReference type="GO" id="GO:0043024">
    <property type="term" value="F:ribosomal small subunit binding"/>
    <property type="evidence" value="ECO:0007669"/>
    <property type="project" value="TreeGrafter"/>
</dbReference>
<dbReference type="GO" id="GO:0030490">
    <property type="term" value="P:maturation of SSU-rRNA"/>
    <property type="evidence" value="ECO:0007669"/>
    <property type="project" value="UniProtKB-UniRule"/>
</dbReference>
<dbReference type="Gene3D" id="3.30.300.20">
    <property type="match status" value="1"/>
</dbReference>
<dbReference type="HAMAP" id="MF_00003">
    <property type="entry name" value="RbfA"/>
    <property type="match status" value="1"/>
</dbReference>
<dbReference type="InterPro" id="IPR015946">
    <property type="entry name" value="KH_dom-like_a/b"/>
</dbReference>
<dbReference type="InterPro" id="IPR000238">
    <property type="entry name" value="RbfA"/>
</dbReference>
<dbReference type="InterPro" id="IPR023799">
    <property type="entry name" value="RbfA_dom_sf"/>
</dbReference>
<dbReference type="InterPro" id="IPR020053">
    <property type="entry name" value="Ribosome-bd_factorA_CS"/>
</dbReference>
<dbReference type="NCBIfam" id="TIGR00082">
    <property type="entry name" value="rbfA"/>
    <property type="match status" value="1"/>
</dbReference>
<dbReference type="PANTHER" id="PTHR33515">
    <property type="entry name" value="RIBOSOME-BINDING FACTOR A, CHLOROPLASTIC-RELATED"/>
    <property type="match status" value="1"/>
</dbReference>
<dbReference type="PANTHER" id="PTHR33515:SF1">
    <property type="entry name" value="RIBOSOME-BINDING FACTOR A, CHLOROPLASTIC-RELATED"/>
    <property type="match status" value="1"/>
</dbReference>
<dbReference type="Pfam" id="PF02033">
    <property type="entry name" value="RBFA"/>
    <property type="match status" value="1"/>
</dbReference>
<dbReference type="SUPFAM" id="SSF89919">
    <property type="entry name" value="Ribosome-binding factor A, RbfA"/>
    <property type="match status" value="1"/>
</dbReference>
<dbReference type="PROSITE" id="PS01319">
    <property type="entry name" value="RBFA"/>
    <property type="match status" value="1"/>
</dbReference>
<gene>
    <name evidence="1" type="primary">rbfA</name>
    <name type="ordered locus">Mmwyl1_1028</name>
</gene>
<sequence length="129" mass="14595">MAGEFSRTSRIGDQLQKELASLIQFEVKDPRLGLVTVNEVRVAKDLGYADIYYTVLGKDDQPEVLAENQAALDSAKGFLRRRLAQEVKLRVMPHLRFHYDQSVVNGSRMSALIDEAIRDDETKNGNEDE</sequence>
<organism>
    <name type="scientific">Marinomonas sp. (strain MWYL1)</name>
    <dbReference type="NCBI Taxonomy" id="400668"/>
    <lineage>
        <taxon>Bacteria</taxon>
        <taxon>Pseudomonadati</taxon>
        <taxon>Pseudomonadota</taxon>
        <taxon>Gammaproteobacteria</taxon>
        <taxon>Oceanospirillales</taxon>
        <taxon>Oceanospirillaceae</taxon>
        <taxon>Marinomonas</taxon>
    </lineage>
</organism>